<sequence>MPTINQLIRKKRQSGATRKKSPALQKSPQKRGVCLQVKTKTPKKPNSALRKVAWVRLSNGQEVIAYIGGEGHNLQEHSIVLVQGGRVKDLPGVRYHIVRGALDCAAVKNRKQSRSRYGAKRPK</sequence>
<protein>
    <recommendedName>
        <fullName evidence="1">Small ribosomal subunit protein uS12</fullName>
    </recommendedName>
    <alternativeName>
        <fullName evidence="3">30S ribosomal protein S12</fullName>
    </alternativeName>
</protein>
<proteinExistence type="inferred from homology"/>
<accession>P66371</accession>
<accession>O84446</accession>
<accession>Q9PJV4</accession>
<gene>
    <name evidence="1" type="primary">rpsL</name>
    <name type="synonym">rs12</name>
    <name type="ordered locus">TC_0723</name>
</gene>
<name>RS12_CHLMU</name>
<dbReference type="EMBL" id="AE002160">
    <property type="protein sequence ID" value="AAF73598.1"/>
    <property type="molecule type" value="Genomic_DNA"/>
</dbReference>
<dbReference type="RefSeq" id="WP_009871794.1">
    <property type="nucleotide sequence ID" value="NZ_CP063055.1"/>
</dbReference>
<dbReference type="SMR" id="P66371"/>
<dbReference type="GeneID" id="93065272"/>
<dbReference type="KEGG" id="cmu:TC_0723"/>
<dbReference type="eggNOG" id="COG0048">
    <property type="taxonomic scope" value="Bacteria"/>
</dbReference>
<dbReference type="HOGENOM" id="CLU_104295_1_2_0"/>
<dbReference type="OrthoDB" id="9802366at2"/>
<dbReference type="Proteomes" id="UP000000800">
    <property type="component" value="Chromosome"/>
</dbReference>
<dbReference type="GO" id="GO:0015935">
    <property type="term" value="C:small ribosomal subunit"/>
    <property type="evidence" value="ECO:0007669"/>
    <property type="project" value="InterPro"/>
</dbReference>
<dbReference type="GO" id="GO:0019843">
    <property type="term" value="F:rRNA binding"/>
    <property type="evidence" value="ECO:0007669"/>
    <property type="project" value="UniProtKB-UniRule"/>
</dbReference>
<dbReference type="GO" id="GO:0003735">
    <property type="term" value="F:structural constituent of ribosome"/>
    <property type="evidence" value="ECO:0007669"/>
    <property type="project" value="InterPro"/>
</dbReference>
<dbReference type="GO" id="GO:0000049">
    <property type="term" value="F:tRNA binding"/>
    <property type="evidence" value="ECO:0007669"/>
    <property type="project" value="UniProtKB-UniRule"/>
</dbReference>
<dbReference type="GO" id="GO:0006412">
    <property type="term" value="P:translation"/>
    <property type="evidence" value="ECO:0007669"/>
    <property type="project" value="UniProtKB-UniRule"/>
</dbReference>
<dbReference type="CDD" id="cd03368">
    <property type="entry name" value="Ribosomal_S12"/>
    <property type="match status" value="1"/>
</dbReference>
<dbReference type="FunFam" id="2.40.50.140:FF:000001">
    <property type="entry name" value="30S ribosomal protein S12"/>
    <property type="match status" value="1"/>
</dbReference>
<dbReference type="Gene3D" id="2.40.50.140">
    <property type="entry name" value="Nucleic acid-binding proteins"/>
    <property type="match status" value="1"/>
</dbReference>
<dbReference type="HAMAP" id="MF_00403_B">
    <property type="entry name" value="Ribosomal_uS12_B"/>
    <property type="match status" value="1"/>
</dbReference>
<dbReference type="InterPro" id="IPR012340">
    <property type="entry name" value="NA-bd_OB-fold"/>
</dbReference>
<dbReference type="InterPro" id="IPR006032">
    <property type="entry name" value="Ribosomal_uS12"/>
</dbReference>
<dbReference type="InterPro" id="IPR005679">
    <property type="entry name" value="Ribosomal_uS12_bac"/>
</dbReference>
<dbReference type="NCBIfam" id="TIGR00981">
    <property type="entry name" value="rpsL_bact"/>
    <property type="match status" value="1"/>
</dbReference>
<dbReference type="PANTHER" id="PTHR11652">
    <property type="entry name" value="30S RIBOSOMAL PROTEIN S12 FAMILY MEMBER"/>
    <property type="match status" value="1"/>
</dbReference>
<dbReference type="Pfam" id="PF00164">
    <property type="entry name" value="Ribosom_S12_S23"/>
    <property type="match status" value="1"/>
</dbReference>
<dbReference type="PIRSF" id="PIRSF002133">
    <property type="entry name" value="Ribosomal_S12/S23"/>
    <property type="match status" value="1"/>
</dbReference>
<dbReference type="PRINTS" id="PR01034">
    <property type="entry name" value="RIBOSOMALS12"/>
</dbReference>
<dbReference type="SUPFAM" id="SSF50249">
    <property type="entry name" value="Nucleic acid-binding proteins"/>
    <property type="match status" value="1"/>
</dbReference>
<dbReference type="PROSITE" id="PS00055">
    <property type="entry name" value="RIBOSOMAL_S12"/>
    <property type="match status" value="1"/>
</dbReference>
<organism>
    <name type="scientific">Chlamydia muridarum (strain MoPn / Nigg)</name>
    <dbReference type="NCBI Taxonomy" id="243161"/>
    <lineage>
        <taxon>Bacteria</taxon>
        <taxon>Pseudomonadati</taxon>
        <taxon>Chlamydiota</taxon>
        <taxon>Chlamydiia</taxon>
        <taxon>Chlamydiales</taxon>
        <taxon>Chlamydiaceae</taxon>
        <taxon>Chlamydia/Chlamydophila group</taxon>
        <taxon>Chlamydia</taxon>
    </lineage>
</organism>
<feature type="chain" id="PRO_0000146207" description="Small ribosomal subunit protein uS12">
    <location>
        <begin position="1"/>
        <end position="123"/>
    </location>
</feature>
<feature type="region of interest" description="Disordered" evidence="2">
    <location>
        <begin position="1"/>
        <end position="45"/>
    </location>
</feature>
<feature type="compositionally biased region" description="Basic residues" evidence="2">
    <location>
        <begin position="8"/>
        <end position="21"/>
    </location>
</feature>
<reference key="1">
    <citation type="journal article" date="2000" name="Nucleic Acids Res.">
        <title>Genome sequences of Chlamydia trachomatis MoPn and Chlamydia pneumoniae AR39.</title>
        <authorList>
            <person name="Read T.D."/>
            <person name="Brunham R.C."/>
            <person name="Shen C."/>
            <person name="Gill S.R."/>
            <person name="Heidelberg J.F."/>
            <person name="White O."/>
            <person name="Hickey E.K."/>
            <person name="Peterson J.D."/>
            <person name="Utterback T.R."/>
            <person name="Berry K.J."/>
            <person name="Bass S."/>
            <person name="Linher K.D."/>
            <person name="Weidman J.F."/>
            <person name="Khouri H.M."/>
            <person name="Craven B."/>
            <person name="Bowman C."/>
            <person name="Dodson R.J."/>
            <person name="Gwinn M.L."/>
            <person name="Nelson W.C."/>
            <person name="DeBoy R.T."/>
            <person name="Kolonay J.F."/>
            <person name="McClarty G."/>
            <person name="Salzberg S.L."/>
            <person name="Eisen J.A."/>
            <person name="Fraser C.M."/>
        </authorList>
    </citation>
    <scope>NUCLEOTIDE SEQUENCE [LARGE SCALE GENOMIC DNA]</scope>
    <source>
        <strain>MoPn / Nigg</strain>
    </source>
</reference>
<evidence type="ECO:0000255" key="1">
    <source>
        <dbReference type="HAMAP-Rule" id="MF_00403"/>
    </source>
</evidence>
<evidence type="ECO:0000256" key="2">
    <source>
        <dbReference type="SAM" id="MobiDB-lite"/>
    </source>
</evidence>
<evidence type="ECO:0000305" key="3"/>
<keyword id="KW-0687">Ribonucleoprotein</keyword>
<keyword id="KW-0689">Ribosomal protein</keyword>
<keyword id="KW-0694">RNA-binding</keyword>
<keyword id="KW-0699">rRNA-binding</keyword>
<keyword id="KW-0820">tRNA-binding</keyword>
<comment type="function">
    <text evidence="1">With S4 and S5 plays an important role in translational accuracy.</text>
</comment>
<comment type="function">
    <text evidence="1">Interacts with and stabilizes bases of the 16S rRNA that are involved in tRNA selection in the A site and with the mRNA backbone. Located at the interface of the 30S and 50S subunits, it traverses the body of the 30S subunit contacting proteins on the other side and probably holding the rRNA structure together. The combined cluster of proteins S8, S12 and S17 appears to hold together the shoulder and platform of the 30S subunit.</text>
</comment>
<comment type="subunit">
    <text evidence="1">Part of the 30S ribosomal subunit. Contacts proteins S8 and S17. May interact with IF1 in the 30S initiation complex.</text>
</comment>
<comment type="similarity">
    <text evidence="1">Belongs to the universal ribosomal protein uS12 family.</text>
</comment>
<comment type="caution">
    <text evidence="3">Because the enzyme that would modify Asp-89 to 3-methylthioaspartic acid has not been found in the proteome of this organism, that modification is not predicted.</text>
</comment>